<gene>
    <name evidence="1" type="primary">acpS</name>
    <name type="ordered locus">Tcr_0738</name>
</gene>
<organism>
    <name type="scientific">Hydrogenovibrio crunogenus (strain DSM 25203 / XCL-2)</name>
    <name type="common">Thiomicrospira crunogena</name>
    <dbReference type="NCBI Taxonomy" id="317025"/>
    <lineage>
        <taxon>Bacteria</taxon>
        <taxon>Pseudomonadati</taxon>
        <taxon>Pseudomonadota</taxon>
        <taxon>Gammaproteobacteria</taxon>
        <taxon>Thiotrichales</taxon>
        <taxon>Piscirickettsiaceae</taxon>
        <taxon>Hydrogenovibrio</taxon>
    </lineage>
</organism>
<sequence length="127" mass="14000">MIVGIGTDLVEIARIAALMTKRNEVFAKRILAQQELERFKQHGQPEKFLAKRWAAKEAISKALGTGFTQGVCFTDMIIGHTDQGQPLIELTGKTAEIAQQLGIENWSISISDEAHYAVAFVIAESRS</sequence>
<name>ACPS_HYDCU</name>
<evidence type="ECO:0000255" key="1">
    <source>
        <dbReference type="HAMAP-Rule" id="MF_00101"/>
    </source>
</evidence>
<proteinExistence type="inferred from homology"/>
<accession>Q31HN9</accession>
<protein>
    <recommendedName>
        <fullName evidence="1">Holo-[acyl-carrier-protein] synthase</fullName>
        <shortName evidence="1">Holo-ACP synthase</shortName>
        <ecNumber evidence="1">2.7.8.7</ecNumber>
    </recommendedName>
    <alternativeName>
        <fullName evidence="1">4'-phosphopantetheinyl transferase AcpS</fullName>
    </alternativeName>
</protein>
<keyword id="KW-0963">Cytoplasm</keyword>
<keyword id="KW-0275">Fatty acid biosynthesis</keyword>
<keyword id="KW-0276">Fatty acid metabolism</keyword>
<keyword id="KW-0444">Lipid biosynthesis</keyword>
<keyword id="KW-0443">Lipid metabolism</keyword>
<keyword id="KW-0460">Magnesium</keyword>
<keyword id="KW-0479">Metal-binding</keyword>
<keyword id="KW-0808">Transferase</keyword>
<reference key="1">
    <citation type="journal article" date="2006" name="PLoS Biol.">
        <title>The genome of deep-sea vent chemolithoautotroph Thiomicrospira crunogena XCL-2.</title>
        <authorList>
            <person name="Scott K.M."/>
            <person name="Sievert S.M."/>
            <person name="Abril F.N."/>
            <person name="Ball L.A."/>
            <person name="Barrett C.J."/>
            <person name="Blake R.A."/>
            <person name="Boller A.J."/>
            <person name="Chain P.S.G."/>
            <person name="Clark J.A."/>
            <person name="Davis C.R."/>
            <person name="Detter C."/>
            <person name="Do K.F."/>
            <person name="Dobrinski K.P."/>
            <person name="Faza B.I."/>
            <person name="Fitzpatrick K.A."/>
            <person name="Freyermuth S.K."/>
            <person name="Harmer T.L."/>
            <person name="Hauser L.J."/>
            <person name="Huegler M."/>
            <person name="Kerfeld C.A."/>
            <person name="Klotz M.G."/>
            <person name="Kong W.W."/>
            <person name="Land M."/>
            <person name="Lapidus A."/>
            <person name="Larimer F.W."/>
            <person name="Longo D.L."/>
            <person name="Lucas S."/>
            <person name="Malfatti S.A."/>
            <person name="Massey S.E."/>
            <person name="Martin D.D."/>
            <person name="McCuddin Z."/>
            <person name="Meyer F."/>
            <person name="Moore J.L."/>
            <person name="Ocampo L.H. Jr."/>
            <person name="Paul J.H."/>
            <person name="Paulsen I.T."/>
            <person name="Reep D.K."/>
            <person name="Ren Q."/>
            <person name="Ross R.L."/>
            <person name="Sato P.Y."/>
            <person name="Thomas P."/>
            <person name="Tinkham L.E."/>
            <person name="Zeruth G.T."/>
        </authorList>
    </citation>
    <scope>NUCLEOTIDE SEQUENCE [LARGE SCALE GENOMIC DNA]</scope>
    <source>
        <strain>DSM 25203 / XCL-2</strain>
    </source>
</reference>
<comment type="function">
    <text evidence="1">Transfers the 4'-phosphopantetheine moiety from coenzyme A to a Ser of acyl-carrier-protein.</text>
</comment>
<comment type="catalytic activity">
    <reaction evidence="1">
        <text>apo-[ACP] + CoA = holo-[ACP] + adenosine 3',5'-bisphosphate + H(+)</text>
        <dbReference type="Rhea" id="RHEA:12068"/>
        <dbReference type="Rhea" id="RHEA-COMP:9685"/>
        <dbReference type="Rhea" id="RHEA-COMP:9690"/>
        <dbReference type="ChEBI" id="CHEBI:15378"/>
        <dbReference type="ChEBI" id="CHEBI:29999"/>
        <dbReference type="ChEBI" id="CHEBI:57287"/>
        <dbReference type="ChEBI" id="CHEBI:58343"/>
        <dbReference type="ChEBI" id="CHEBI:64479"/>
        <dbReference type="EC" id="2.7.8.7"/>
    </reaction>
</comment>
<comment type="cofactor">
    <cofactor evidence="1">
        <name>Mg(2+)</name>
        <dbReference type="ChEBI" id="CHEBI:18420"/>
    </cofactor>
</comment>
<comment type="subcellular location">
    <subcellularLocation>
        <location evidence="1">Cytoplasm</location>
    </subcellularLocation>
</comment>
<comment type="similarity">
    <text evidence="1">Belongs to the P-Pant transferase superfamily. AcpS family.</text>
</comment>
<feature type="chain" id="PRO_1000008521" description="Holo-[acyl-carrier-protein] synthase">
    <location>
        <begin position="1"/>
        <end position="127"/>
    </location>
</feature>
<feature type="binding site" evidence="1">
    <location>
        <position position="8"/>
    </location>
    <ligand>
        <name>Mg(2+)</name>
        <dbReference type="ChEBI" id="CHEBI:18420"/>
    </ligand>
</feature>
<feature type="binding site" evidence="1">
    <location>
        <position position="57"/>
    </location>
    <ligand>
        <name>Mg(2+)</name>
        <dbReference type="ChEBI" id="CHEBI:18420"/>
    </ligand>
</feature>
<dbReference type="EC" id="2.7.8.7" evidence="1"/>
<dbReference type="EMBL" id="CP000109">
    <property type="protein sequence ID" value="ABB41334.1"/>
    <property type="molecule type" value="Genomic_DNA"/>
</dbReference>
<dbReference type="SMR" id="Q31HN9"/>
<dbReference type="STRING" id="317025.Tcr_0738"/>
<dbReference type="KEGG" id="tcx:Tcr_0738"/>
<dbReference type="eggNOG" id="COG0736">
    <property type="taxonomic scope" value="Bacteria"/>
</dbReference>
<dbReference type="HOGENOM" id="CLU_089696_3_1_6"/>
<dbReference type="OrthoDB" id="517356at2"/>
<dbReference type="GO" id="GO:0005737">
    <property type="term" value="C:cytoplasm"/>
    <property type="evidence" value="ECO:0007669"/>
    <property type="project" value="UniProtKB-SubCell"/>
</dbReference>
<dbReference type="GO" id="GO:0008897">
    <property type="term" value="F:holo-[acyl-carrier-protein] synthase activity"/>
    <property type="evidence" value="ECO:0007669"/>
    <property type="project" value="UniProtKB-UniRule"/>
</dbReference>
<dbReference type="GO" id="GO:0000287">
    <property type="term" value="F:magnesium ion binding"/>
    <property type="evidence" value="ECO:0007669"/>
    <property type="project" value="UniProtKB-UniRule"/>
</dbReference>
<dbReference type="GO" id="GO:0006633">
    <property type="term" value="P:fatty acid biosynthetic process"/>
    <property type="evidence" value="ECO:0007669"/>
    <property type="project" value="UniProtKB-UniRule"/>
</dbReference>
<dbReference type="FunFam" id="3.90.470.20:FF:000001">
    <property type="entry name" value="Holo-[acyl-carrier-protein] synthase"/>
    <property type="match status" value="1"/>
</dbReference>
<dbReference type="Gene3D" id="3.90.470.20">
    <property type="entry name" value="4'-phosphopantetheinyl transferase domain"/>
    <property type="match status" value="1"/>
</dbReference>
<dbReference type="HAMAP" id="MF_00101">
    <property type="entry name" value="AcpS"/>
    <property type="match status" value="1"/>
</dbReference>
<dbReference type="InterPro" id="IPR008278">
    <property type="entry name" value="4-PPantetheinyl_Trfase_dom"/>
</dbReference>
<dbReference type="InterPro" id="IPR037143">
    <property type="entry name" value="4-PPantetheinyl_Trfase_dom_sf"/>
</dbReference>
<dbReference type="InterPro" id="IPR002582">
    <property type="entry name" value="ACPS"/>
</dbReference>
<dbReference type="InterPro" id="IPR004568">
    <property type="entry name" value="Ppantetheine-prot_Trfase_dom"/>
</dbReference>
<dbReference type="NCBIfam" id="TIGR00516">
    <property type="entry name" value="acpS"/>
    <property type="match status" value="1"/>
</dbReference>
<dbReference type="NCBIfam" id="TIGR00556">
    <property type="entry name" value="pantethn_trn"/>
    <property type="match status" value="1"/>
</dbReference>
<dbReference type="Pfam" id="PF01648">
    <property type="entry name" value="ACPS"/>
    <property type="match status" value="1"/>
</dbReference>
<dbReference type="SUPFAM" id="SSF56214">
    <property type="entry name" value="4'-phosphopantetheinyl transferase"/>
    <property type="match status" value="1"/>
</dbReference>